<dbReference type="EMBL" id="BX936298">
    <property type="protein sequence ID" value="CAK11204.1"/>
    <property type="molecule type" value="Genomic_DNA"/>
</dbReference>
<dbReference type="EMBL" id="BX936298">
    <property type="protein sequence ID" value="CAK11205.1"/>
    <property type="status" value="ALT_SEQ"/>
    <property type="molecule type" value="Genomic_DNA"/>
</dbReference>
<dbReference type="EMBL" id="BC133965">
    <property type="protein sequence ID" value="AAI33966.1"/>
    <property type="molecule type" value="mRNA"/>
</dbReference>
<dbReference type="RefSeq" id="NP_001038338.1">
    <property type="nucleotide sequence ID" value="NM_001044873.1"/>
</dbReference>
<dbReference type="FunCoup" id="Q1LUK1">
    <property type="interactions" value="1002"/>
</dbReference>
<dbReference type="STRING" id="7955.ENSDARP00000096258"/>
<dbReference type="PaxDb" id="7955-ENSDARP00000096258"/>
<dbReference type="Ensembl" id="ENSDART00000105485">
    <property type="protein sequence ID" value="ENSDARP00000096258"/>
    <property type="gene ID" value="ENSDARG00000071378"/>
</dbReference>
<dbReference type="GeneID" id="558738"/>
<dbReference type="KEGG" id="dre:558738"/>
<dbReference type="AGR" id="ZFIN:ZDB-GENE-050309-178"/>
<dbReference type="CTD" id="125988"/>
<dbReference type="ZFIN" id="ZDB-GENE-050309-178">
    <property type="gene designation" value="micos13"/>
</dbReference>
<dbReference type="eggNOG" id="ENOG502S4BC">
    <property type="taxonomic scope" value="Eukaryota"/>
</dbReference>
<dbReference type="HOGENOM" id="CLU_152642_0_1_1"/>
<dbReference type="InParanoid" id="Q1LUK1"/>
<dbReference type="OMA" id="GWKYMKD"/>
<dbReference type="OrthoDB" id="5948578at2759"/>
<dbReference type="PhylomeDB" id="Q1LUK1"/>
<dbReference type="TreeFam" id="TF343386"/>
<dbReference type="PRO" id="PR:Q1LUK1"/>
<dbReference type="Proteomes" id="UP000000437">
    <property type="component" value="Alternate scaffold 22"/>
</dbReference>
<dbReference type="Proteomes" id="UP000000437">
    <property type="component" value="Chromosome 22"/>
</dbReference>
<dbReference type="Bgee" id="ENSDARG00000071378">
    <property type="expression patterns" value="Expressed in heart and 20 other cell types or tissues"/>
</dbReference>
<dbReference type="ExpressionAtlas" id="Q1LUK1">
    <property type="expression patterns" value="baseline"/>
</dbReference>
<dbReference type="GO" id="GO:0061617">
    <property type="term" value="C:MICOS complex"/>
    <property type="evidence" value="ECO:0000250"/>
    <property type="project" value="UniProtKB"/>
</dbReference>
<dbReference type="GO" id="GO:0044284">
    <property type="term" value="C:mitochondrial crista junction"/>
    <property type="evidence" value="ECO:0000250"/>
    <property type="project" value="UniProtKB"/>
</dbReference>
<dbReference type="GO" id="GO:0005743">
    <property type="term" value="C:mitochondrial inner membrane"/>
    <property type="evidence" value="ECO:0000250"/>
    <property type="project" value="UniProtKB"/>
</dbReference>
<dbReference type="GO" id="GO:0042407">
    <property type="term" value="P:cristae formation"/>
    <property type="evidence" value="ECO:0000250"/>
    <property type="project" value="UniProtKB"/>
</dbReference>
<dbReference type="InterPro" id="IPR026769">
    <property type="entry name" value="Mic13"/>
</dbReference>
<dbReference type="PANTHER" id="PTHR31816">
    <property type="entry name" value="MICOS COMPLEX SUBUNIT MIC13"/>
    <property type="match status" value="1"/>
</dbReference>
<dbReference type="PANTHER" id="PTHR31816:SF3">
    <property type="entry name" value="MICOS COMPLEX SUBUNIT MIC13"/>
    <property type="match status" value="1"/>
</dbReference>
<dbReference type="Pfam" id="PF15884">
    <property type="entry name" value="QIL1"/>
    <property type="match status" value="1"/>
</dbReference>
<sequence length="111" mass="11753">MAAKIFPVVKFATKVTIAGGALYVAYDSGLLGGSNEGSVALARAKSAIPPAVDEWMKYFGFELPATPKIEFSPLDAWNSGVQKSIHALSVAPSTVGDYTKQGLQYVKDLSK</sequence>
<keyword id="KW-0472">Membrane</keyword>
<keyword id="KW-0496">Mitochondrion</keyword>
<keyword id="KW-0999">Mitochondrion inner membrane</keyword>
<keyword id="KW-1185">Reference proteome</keyword>
<keyword id="KW-0812">Transmembrane</keyword>
<keyword id="KW-1133">Transmembrane helix</keyword>
<reference key="1">
    <citation type="journal article" date="2013" name="Nature">
        <title>The zebrafish reference genome sequence and its relationship to the human genome.</title>
        <authorList>
            <person name="Howe K."/>
            <person name="Clark M.D."/>
            <person name="Torroja C.F."/>
            <person name="Torrance J."/>
            <person name="Berthelot C."/>
            <person name="Muffato M."/>
            <person name="Collins J.E."/>
            <person name="Humphray S."/>
            <person name="McLaren K."/>
            <person name="Matthews L."/>
            <person name="McLaren S."/>
            <person name="Sealy I."/>
            <person name="Caccamo M."/>
            <person name="Churcher C."/>
            <person name="Scott C."/>
            <person name="Barrett J.C."/>
            <person name="Koch R."/>
            <person name="Rauch G.J."/>
            <person name="White S."/>
            <person name="Chow W."/>
            <person name="Kilian B."/>
            <person name="Quintais L.T."/>
            <person name="Guerra-Assuncao J.A."/>
            <person name="Zhou Y."/>
            <person name="Gu Y."/>
            <person name="Yen J."/>
            <person name="Vogel J.H."/>
            <person name="Eyre T."/>
            <person name="Redmond S."/>
            <person name="Banerjee R."/>
            <person name="Chi J."/>
            <person name="Fu B."/>
            <person name="Langley E."/>
            <person name="Maguire S.F."/>
            <person name="Laird G.K."/>
            <person name="Lloyd D."/>
            <person name="Kenyon E."/>
            <person name="Donaldson S."/>
            <person name="Sehra H."/>
            <person name="Almeida-King J."/>
            <person name="Loveland J."/>
            <person name="Trevanion S."/>
            <person name="Jones M."/>
            <person name="Quail M."/>
            <person name="Willey D."/>
            <person name="Hunt A."/>
            <person name="Burton J."/>
            <person name="Sims S."/>
            <person name="McLay K."/>
            <person name="Plumb B."/>
            <person name="Davis J."/>
            <person name="Clee C."/>
            <person name="Oliver K."/>
            <person name="Clark R."/>
            <person name="Riddle C."/>
            <person name="Elliot D."/>
            <person name="Threadgold G."/>
            <person name="Harden G."/>
            <person name="Ware D."/>
            <person name="Begum S."/>
            <person name="Mortimore B."/>
            <person name="Kerry G."/>
            <person name="Heath P."/>
            <person name="Phillimore B."/>
            <person name="Tracey A."/>
            <person name="Corby N."/>
            <person name="Dunn M."/>
            <person name="Johnson C."/>
            <person name="Wood J."/>
            <person name="Clark S."/>
            <person name="Pelan S."/>
            <person name="Griffiths G."/>
            <person name="Smith M."/>
            <person name="Glithero R."/>
            <person name="Howden P."/>
            <person name="Barker N."/>
            <person name="Lloyd C."/>
            <person name="Stevens C."/>
            <person name="Harley J."/>
            <person name="Holt K."/>
            <person name="Panagiotidis G."/>
            <person name="Lovell J."/>
            <person name="Beasley H."/>
            <person name="Henderson C."/>
            <person name="Gordon D."/>
            <person name="Auger K."/>
            <person name="Wright D."/>
            <person name="Collins J."/>
            <person name="Raisen C."/>
            <person name="Dyer L."/>
            <person name="Leung K."/>
            <person name="Robertson L."/>
            <person name="Ambridge K."/>
            <person name="Leongamornlert D."/>
            <person name="McGuire S."/>
            <person name="Gilderthorp R."/>
            <person name="Griffiths C."/>
            <person name="Manthravadi D."/>
            <person name="Nichol S."/>
            <person name="Barker G."/>
            <person name="Whitehead S."/>
            <person name="Kay M."/>
            <person name="Brown J."/>
            <person name="Murnane C."/>
            <person name="Gray E."/>
            <person name="Humphries M."/>
            <person name="Sycamore N."/>
            <person name="Barker D."/>
            <person name="Saunders D."/>
            <person name="Wallis J."/>
            <person name="Babbage A."/>
            <person name="Hammond S."/>
            <person name="Mashreghi-Mohammadi M."/>
            <person name="Barr L."/>
            <person name="Martin S."/>
            <person name="Wray P."/>
            <person name="Ellington A."/>
            <person name="Matthews N."/>
            <person name="Ellwood M."/>
            <person name="Woodmansey R."/>
            <person name="Clark G."/>
            <person name="Cooper J."/>
            <person name="Tromans A."/>
            <person name="Grafham D."/>
            <person name="Skuce C."/>
            <person name="Pandian R."/>
            <person name="Andrews R."/>
            <person name="Harrison E."/>
            <person name="Kimberley A."/>
            <person name="Garnett J."/>
            <person name="Fosker N."/>
            <person name="Hall R."/>
            <person name="Garner P."/>
            <person name="Kelly D."/>
            <person name="Bird C."/>
            <person name="Palmer S."/>
            <person name="Gehring I."/>
            <person name="Berger A."/>
            <person name="Dooley C.M."/>
            <person name="Ersan-Urun Z."/>
            <person name="Eser C."/>
            <person name="Geiger H."/>
            <person name="Geisler M."/>
            <person name="Karotki L."/>
            <person name="Kirn A."/>
            <person name="Konantz J."/>
            <person name="Konantz M."/>
            <person name="Oberlander M."/>
            <person name="Rudolph-Geiger S."/>
            <person name="Teucke M."/>
            <person name="Lanz C."/>
            <person name="Raddatz G."/>
            <person name="Osoegawa K."/>
            <person name="Zhu B."/>
            <person name="Rapp A."/>
            <person name="Widaa S."/>
            <person name="Langford C."/>
            <person name="Yang F."/>
            <person name="Schuster S.C."/>
            <person name="Carter N.P."/>
            <person name="Harrow J."/>
            <person name="Ning Z."/>
            <person name="Herrero J."/>
            <person name="Searle S.M."/>
            <person name="Enright A."/>
            <person name="Geisler R."/>
            <person name="Plasterk R.H."/>
            <person name="Lee C."/>
            <person name="Westerfield M."/>
            <person name="de Jong P.J."/>
            <person name="Zon L.I."/>
            <person name="Postlethwait J.H."/>
            <person name="Nusslein-Volhard C."/>
            <person name="Hubbard T.J."/>
            <person name="Roest Crollius H."/>
            <person name="Rogers J."/>
            <person name="Stemple D.L."/>
        </authorList>
    </citation>
    <scope>NUCLEOTIDE SEQUENCE [LARGE SCALE GENOMIC DNA]</scope>
    <source>
        <strain>Tuebingen</strain>
    </source>
</reference>
<reference key="2">
    <citation type="submission" date="2007-03" db="EMBL/GenBank/DDBJ databases">
        <authorList>
            <consortium name="NIH - Zebrafish Gene Collection (ZGC) project"/>
        </authorList>
    </citation>
    <scope>NUCLEOTIDE SEQUENCE [LARGE SCALE MRNA]</scope>
    <source>
        <tissue>Embryo</tissue>
    </source>
</reference>
<evidence type="ECO:0000250" key="1">
    <source>
        <dbReference type="UniProtKB" id="Q5XKP0"/>
    </source>
</evidence>
<evidence type="ECO:0000255" key="2"/>
<evidence type="ECO:0000305" key="3"/>
<comment type="function">
    <text evidence="1">Component of the MICOS complex, a large protein complex of the mitochondrial inner membrane that plays crucial roles in the maintenance of crista junctions, inner membrane architecture, and formation of contact sites to the outer membrane. Constituent of mature MICOS complex, it is required for the formation of cristae junction (CJ) and maintenance of cristae morphology. Required for the incorporation of MIC10 into the MICOS complex.</text>
</comment>
<comment type="subunit">
    <text evidence="1">Component of the mitochondrial contact site and cristae organizing system (MICOS) complex.</text>
</comment>
<comment type="subcellular location">
    <subcellularLocation>
        <location evidence="1">Mitochondrion inner membrane</location>
        <topology evidence="2">Single-pass membrane protein</topology>
    </subcellularLocation>
    <text evidence="1">Enriched at crista junctions.</text>
</comment>
<comment type="similarity">
    <text evidence="3">Belongs to the MICOS complex subunit Mic13 family.</text>
</comment>
<comment type="sequence caution" evidence="3">
    <conflict type="erroneous gene model prediction">
        <sequence resource="EMBL-CDS" id="CAK11205"/>
    </conflict>
</comment>
<feature type="chain" id="PRO_0000360980" description="MICOS complex subunit MIC13">
    <location>
        <begin position="1"/>
        <end position="111"/>
    </location>
</feature>
<feature type="transmembrane region" description="Helical" evidence="2">
    <location>
        <begin position="8"/>
        <end position="26"/>
    </location>
</feature>
<feature type="sequence conflict" description="In Ref. 1; CAK11205." evidence="3" ref="1">
    <original>L</original>
    <variation>V</variation>
    <location>
        <position position="63"/>
    </location>
</feature>
<accession>Q1LUK1</accession>
<accession>Q1LUK0</accession>
<proteinExistence type="inferred from homology"/>
<organism>
    <name type="scientific">Danio rerio</name>
    <name type="common">Zebrafish</name>
    <name type="synonym">Brachydanio rerio</name>
    <dbReference type="NCBI Taxonomy" id="7955"/>
    <lineage>
        <taxon>Eukaryota</taxon>
        <taxon>Metazoa</taxon>
        <taxon>Chordata</taxon>
        <taxon>Craniata</taxon>
        <taxon>Vertebrata</taxon>
        <taxon>Euteleostomi</taxon>
        <taxon>Actinopterygii</taxon>
        <taxon>Neopterygii</taxon>
        <taxon>Teleostei</taxon>
        <taxon>Ostariophysi</taxon>
        <taxon>Cypriniformes</taxon>
        <taxon>Danionidae</taxon>
        <taxon>Danioninae</taxon>
        <taxon>Danio</taxon>
    </lineage>
</organism>
<name>MIC13_DANRE</name>
<protein>
    <recommendedName>
        <fullName evidence="1">MICOS complex subunit MIC13</fullName>
    </recommendedName>
</protein>
<gene>
    <name evidence="1" type="primary">micos13</name>
    <name type="synonym">mic13</name>
    <name type="synonym">qil1</name>
    <name type="ORF">si:dkey-78l4.14</name>
</gene>